<reference key="1">
    <citation type="journal article" date="2002" name="Biochem. Biophys. Res. Commun.">
        <title>Phylogeny of New World arenaviruses based on the complete coding sequences of the small genomic segment identified an evolutionary lineage produced by intrasegmental recombination.</title>
        <authorList>
            <person name="Charrel R.N."/>
            <person name="Feldmann H."/>
            <person name="Fulhorst C.F."/>
            <person name="Khelifa R."/>
            <person name="de Chesse R."/>
            <person name="de Lamballerie X."/>
        </authorList>
    </citation>
    <scope>NUCLEOTIDE SEQUENCE [GENOMIC RNA]</scope>
</reference>
<reference key="2">
    <citation type="journal article" date="2002" name="Virology">
        <title>High genetic divergence and recombination in Arenaviruses from the Americas.</title>
        <authorList>
            <person name="Archer A.M."/>
            <person name="Rico-Hesse R."/>
        </authorList>
    </citation>
    <scope>NUCLEOTIDE SEQUENCE [GENOMIC RNA]</scope>
</reference>
<evidence type="ECO:0000255" key="1">
    <source>
        <dbReference type="HAMAP-Rule" id="MF_04085"/>
    </source>
</evidence>
<protein>
    <recommendedName>
        <fullName evidence="1">Nucleoprotein</fullName>
        <ecNumber evidence="1">3.1.13.-</ecNumber>
    </recommendedName>
    <alternativeName>
        <fullName evidence="1">Nucleocapsid protein</fullName>
    </alternativeName>
    <alternativeName>
        <fullName evidence="1">Protein N</fullName>
    </alternativeName>
</protein>
<comment type="function">
    <text evidence="1">Encapsidates the genome, protecting it from nucleases. The encapsidated genomic RNA is termed the nucleocapsid (NC). Serves as template for viral transcription and replication. The increased presence of protein N in host cell does not seem to trigger the switch from transcription to replication as observed in other negative strain RNA viruses. Through the interaction with host IKBKE, strongly inhibits the phosphorylation and nuclear translocation of host IRF3, a protein involved in interferon activation pathway, leading to the inhibition of interferon-beta and IRF3-dependent promoters activation. Also encodes a functional 3'-5' exoribonuclease that degrades preferentially dsRNA substrates and thereby participates in the suppression of interferon induction.</text>
</comment>
<comment type="subunit">
    <text evidence="1">Homomultimerizes to form the nucleocapsid. Binds to viral genomic RNA. Interacts with glycoprotein G2. Interacts with protein Z; this interaction probably directs the encapsidated genome to budding sites. Interacts with protein L; this interaction does not interfere with Z-L interaction. Interacts with host IKBKE (via Protein kinase domain); the interaction inhibits IKBKE kinase activity.</text>
</comment>
<comment type="subcellular location">
    <subcellularLocation>
        <location evidence="1">Virion</location>
    </subcellularLocation>
    <subcellularLocation>
        <location evidence="1">Host cytoplasm</location>
    </subcellularLocation>
</comment>
<comment type="domain">
    <text evidence="1">The N-terminal region is important for the cap-binding activity while the C-terminal region contains the 3'-5' exoribonuclease activity. A CCHE zinc binding site is present in the C-terminal region and may thus contribute to the substrate binding and/or the specificity of the exonuclease activity.</text>
</comment>
<comment type="similarity">
    <text evidence="1">Belongs to the arenaviridae nucleocapsid protein family.</text>
</comment>
<name>NCAP_GTOVV</name>
<feature type="chain" id="PRO_0000361007" description="Nucleoprotein">
    <location>
        <begin position="1"/>
        <end position="560"/>
    </location>
</feature>
<feature type="region of interest" description="Binding site for the cap structure m7GTP" evidence="1">
    <location>
        <begin position="54"/>
        <end position="236"/>
    </location>
</feature>
<feature type="binding site" evidence="1">
    <location>
        <position position="380"/>
    </location>
    <ligand>
        <name>Mn(2+)</name>
        <dbReference type="ChEBI" id="CHEBI:29035"/>
    </ligand>
</feature>
<feature type="binding site" evidence="1">
    <location>
        <position position="382"/>
    </location>
    <ligand>
        <name>Mn(2+)</name>
        <dbReference type="ChEBI" id="CHEBI:29035"/>
    </ligand>
</feature>
<feature type="binding site" evidence="1">
    <location>
        <position position="390"/>
    </location>
    <ligand>
        <name>Zn(2+)</name>
        <dbReference type="ChEBI" id="CHEBI:29105"/>
    </ligand>
</feature>
<feature type="binding site" evidence="1">
    <location>
        <position position="497"/>
    </location>
    <ligand>
        <name>Zn(2+)</name>
        <dbReference type="ChEBI" id="CHEBI:29105"/>
    </ligand>
</feature>
<feature type="binding site" evidence="1">
    <location>
        <position position="500"/>
    </location>
    <ligand>
        <name>Zn(2+)</name>
        <dbReference type="ChEBI" id="CHEBI:29105"/>
    </ligand>
</feature>
<feature type="binding site" evidence="1">
    <location>
        <position position="521"/>
    </location>
    <ligand>
        <name>Zn(2+)</name>
        <dbReference type="ChEBI" id="CHEBI:29105"/>
    </ligand>
</feature>
<feature type="binding site" evidence="1">
    <location>
        <position position="525"/>
    </location>
    <ligand>
        <name>Mn(2+)</name>
        <dbReference type="ChEBI" id="CHEBI:29035"/>
    </ligand>
</feature>
<feature type="site" description="Important for exonuclease activity" evidence="1">
    <location>
        <position position="457"/>
    </location>
</feature>
<sequence>MAHSKEIPSFRWTQSLRRELGMFTEPTKSSVLNDAKLIADSLDFTQVSQVQRLLRKSKRGDTDLDKLRDLNKEVDRLMSMKSVQNNTVLKVGDLGKDELMDLASDLEKLKKKIGDRESNSPRMYMGNLTQSQLEKRAGILRTLGFQQQRGAAGGVVRLWDVSDPSKLNNQFGSMPALTIACMTVQGGETMNNVVQALTSLGLLYTVKYPNLDDLEKLTLEHDCLQIITKDESALNISGYNFSLSAAVKAGASLIDGGNMLETIKVTPNNFSSIVKAALNVKRREGMFIDERPGNRNPYENLLYKLCLSGEGWPYIGSRSQILGRSWDNTSVDLNARPVTGPRAPEKNGQNIRLSNLSEMQEAIVKEAMRKLDSSDTIWMDIEGPPTDPVELAVFQPSSGNYVHCFRKPHDEKGFKNGSRHSHGILLKDLEDAQPGLLSYVIGLLPQGSVITVQGADDIKKLFDIHGRKDLKLVDVRLTGEQSRIFEQEVWEKFGHLCRAHNGVIVPKKKNKEANSTKEPHCALLDCIMFQSVLDGHLPDTIPIQLLPNTLVFQAKSAFVM</sequence>
<accession>Q8AZ66</accession>
<organismHost>
    <name type="scientific">Homo sapiens</name>
    <name type="common">Human</name>
    <dbReference type="NCBI Taxonomy" id="9606"/>
</organismHost>
<organismHost>
    <name type="scientific">Zygodontomys brevicauda</name>
    <dbReference type="NCBI Taxonomy" id="157541"/>
</organismHost>
<dbReference type="EC" id="3.1.13.-" evidence="1"/>
<dbReference type="EMBL" id="AY129247">
    <property type="protein sequence ID" value="AAN05424.1"/>
    <property type="molecule type" value="Genomic_RNA"/>
</dbReference>
<dbReference type="EMBL" id="AF485258">
    <property type="protein sequence ID" value="AAN09939.1"/>
    <property type="molecule type" value="Genomic_RNA"/>
</dbReference>
<dbReference type="RefSeq" id="NP_899211.1">
    <property type="nucleotide sequence ID" value="NC_005077.1"/>
</dbReference>
<dbReference type="SMR" id="Q8AZ66"/>
<dbReference type="KEGG" id="vg:2943170"/>
<dbReference type="OrthoDB" id="3135at10239"/>
<dbReference type="Proteomes" id="UP000147629">
    <property type="component" value="Genome"/>
</dbReference>
<dbReference type="GO" id="GO:0019029">
    <property type="term" value="C:helical viral capsid"/>
    <property type="evidence" value="ECO:0007669"/>
    <property type="project" value="UniProtKB-UniRule"/>
</dbReference>
<dbReference type="GO" id="GO:0030430">
    <property type="term" value="C:host cell cytoplasm"/>
    <property type="evidence" value="ECO:0007669"/>
    <property type="project" value="UniProtKB-SubCell"/>
</dbReference>
<dbReference type="GO" id="GO:1990904">
    <property type="term" value="C:ribonucleoprotein complex"/>
    <property type="evidence" value="ECO:0007669"/>
    <property type="project" value="UniProtKB-KW"/>
</dbReference>
<dbReference type="GO" id="GO:0019013">
    <property type="term" value="C:viral nucleocapsid"/>
    <property type="evidence" value="ECO:0007669"/>
    <property type="project" value="UniProtKB-UniRule"/>
</dbReference>
<dbReference type="GO" id="GO:0016787">
    <property type="term" value="F:hydrolase activity"/>
    <property type="evidence" value="ECO:0007669"/>
    <property type="project" value="UniProtKB-KW"/>
</dbReference>
<dbReference type="GO" id="GO:0046872">
    <property type="term" value="F:metal ion binding"/>
    <property type="evidence" value="ECO:0007669"/>
    <property type="project" value="UniProtKB-UniRule"/>
</dbReference>
<dbReference type="GO" id="GO:0003723">
    <property type="term" value="F:RNA binding"/>
    <property type="evidence" value="ECO:0007669"/>
    <property type="project" value="UniProtKB-UniRule"/>
</dbReference>
<dbReference type="GO" id="GO:0039689">
    <property type="term" value="P:negative stranded viral RNA replication"/>
    <property type="evidence" value="ECO:0000250"/>
    <property type="project" value="UniProtKB"/>
</dbReference>
<dbReference type="GO" id="GO:0039696">
    <property type="term" value="P:RNA-templated viral transcription"/>
    <property type="evidence" value="ECO:0000250"/>
    <property type="project" value="UniProtKB"/>
</dbReference>
<dbReference type="GO" id="GO:0039724">
    <property type="term" value="P:symbiont-mediated suppression of host cytoplasmic pattern recognition receptor signaling pathway via inhibition of IKBKE activity"/>
    <property type="evidence" value="ECO:0007669"/>
    <property type="project" value="UniProtKB-UniRule"/>
</dbReference>
<dbReference type="FunFam" id="1.10.150.550:FF:000001">
    <property type="entry name" value="Nucleoprotein"/>
    <property type="match status" value="1"/>
</dbReference>
<dbReference type="FunFam" id="1.10.150.550:FF:000002">
    <property type="entry name" value="Nucleoprotein"/>
    <property type="match status" value="1"/>
</dbReference>
<dbReference type="FunFam" id="3.30.420.410:FF:000001">
    <property type="entry name" value="Nucleoprotein"/>
    <property type="match status" value="1"/>
</dbReference>
<dbReference type="Gene3D" id="3.30.420.410">
    <property type="entry name" value="Arenaviral nucleoprotein, C-terminal domain"/>
    <property type="match status" value="1"/>
</dbReference>
<dbReference type="Gene3D" id="1.10.150.550">
    <property type="entry name" value="Arenavirus nucleocapsid protein, head domain"/>
    <property type="match status" value="3"/>
</dbReference>
<dbReference type="HAMAP" id="MF_04085">
    <property type="entry name" value="ARENA_NCAP"/>
    <property type="match status" value="1"/>
</dbReference>
<dbReference type="InterPro" id="IPR000229">
    <property type="entry name" value="Nucleocapsid_arenaviridae"/>
</dbReference>
<dbReference type="InterPro" id="IPR035084">
    <property type="entry name" value="Nucleocapsid_C_arenaviridae"/>
</dbReference>
<dbReference type="InterPro" id="IPR038115">
    <property type="entry name" value="Nucleocapsid_C_sf"/>
</dbReference>
<dbReference type="InterPro" id="IPR035083">
    <property type="entry name" value="Nucleocapsid_N_arenaviridae"/>
</dbReference>
<dbReference type="Pfam" id="PF17290">
    <property type="entry name" value="Arena_ncap_C"/>
    <property type="match status" value="1"/>
</dbReference>
<dbReference type="Pfam" id="PF00843">
    <property type="entry name" value="Arena_nucleocap"/>
    <property type="match status" value="1"/>
</dbReference>
<dbReference type="PIRSF" id="PIRSF004029">
    <property type="entry name" value="N_ArenaV"/>
    <property type="match status" value="1"/>
</dbReference>
<proteinExistence type="inferred from homology"/>
<keyword id="KW-0167">Capsid protein</keyword>
<keyword id="KW-1139">Helical capsid protein</keyword>
<keyword id="KW-1035">Host cytoplasm</keyword>
<keyword id="KW-0945">Host-virus interaction</keyword>
<keyword id="KW-0378">Hydrolase</keyword>
<keyword id="KW-1224">Inhibition of host IKBKE by virus</keyword>
<keyword id="KW-1090">Inhibition of host innate immune response by virus</keyword>
<keyword id="KW-1113">Inhibition of host RLR pathway by virus</keyword>
<keyword id="KW-0922">Interferon antiviral system evasion</keyword>
<keyword id="KW-0464">Manganese</keyword>
<keyword id="KW-0479">Metal-binding</keyword>
<keyword id="KW-0687">Ribonucleoprotein</keyword>
<keyword id="KW-0694">RNA-binding</keyword>
<keyword id="KW-0899">Viral immunoevasion</keyword>
<keyword id="KW-0543">Viral nucleoprotein</keyword>
<keyword id="KW-0946">Virion</keyword>
<keyword id="KW-0862">Zinc</keyword>
<organism>
    <name type="scientific">Guanarito mammarenavirus (isolate Human/Venezuela/NH-95551/1990)</name>
    <name type="common">GTOV</name>
    <dbReference type="NCBI Taxonomy" id="3052307"/>
    <lineage>
        <taxon>Viruses</taxon>
        <taxon>Riboviria</taxon>
        <taxon>Orthornavirae</taxon>
        <taxon>Negarnaviricota</taxon>
        <taxon>Polyploviricotina</taxon>
        <taxon>Ellioviricetes</taxon>
        <taxon>Bunyavirales</taxon>
        <taxon>Arenaviridae</taxon>
        <taxon>Mammarenavirus</taxon>
    </lineage>
</organism>
<gene>
    <name evidence="1" type="primary">N</name>
</gene>